<organism>
    <name type="scientific">Atractaspis engaddensis</name>
    <name type="common">Israeli burrowing asp</name>
    <name type="synonym">Israeli mole viper</name>
    <dbReference type="NCBI Taxonomy" id="1343144"/>
    <lineage>
        <taxon>Eukaryota</taxon>
        <taxon>Metazoa</taxon>
        <taxon>Chordata</taxon>
        <taxon>Craniata</taxon>
        <taxon>Vertebrata</taxon>
        <taxon>Euteleostomi</taxon>
        <taxon>Lepidosauria</taxon>
        <taxon>Squamata</taxon>
        <taxon>Bifurcata</taxon>
        <taxon>Unidentata</taxon>
        <taxon>Episquamata</taxon>
        <taxon>Toxicofera</taxon>
        <taxon>Serpentes</taxon>
        <taxon>Colubroidea</taxon>
        <taxon>Lamprophiidae</taxon>
        <taxon>Atractaspidinae</taxon>
        <taxon>Atractaspis</taxon>
    </lineage>
</organism>
<protein>
    <recommendedName>
        <fullName>Sarafotoxin</fullName>
    </recommendedName>
    <component>
        <recommendedName>
            <fullName>Sarafotoxin-A, Ser-isoform</fullName>
            <shortName>SRTX-A</shortName>
            <shortName>Sarafotoxin-A</shortName>
        </recommendedName>
        <alternativeName>
            <fullName>S6A</fullName>
        </alternativeName>
    </component>
    <component>
        <recommendedName>
            <fullName>Sarafotoxin-C</fullName>
            <shortName>SRTX-C</shortName>
        </recommendedName>
        <alternativeName>
            <fullName>S6C</fullName>
        </alternativeName>
    </component>
    <component>
        <recommendedName>
            <fullName>Sarafotoxin-B</fullName>
            <shortName>SRTX-B</shortName>
        </recommendedName>
        <alternativeName>
            <fullName>S6B</fullName>
        </alternativeName>
    </component>
    <component>
        <recommendedName>
            <fullName>Sarafotoxin-E</fullName>
            <shortName>SRTX-E</shortName>
        </recommendedName>
        <alternativeName>
            <fullName>S6E</fullName>
        </alternativeName>
    </component>
    <component>
        <recommendedName>
            <fullName>Sarafotoxin-A, Thr-isoform</fullName>
        </recommendedName>
    </component>
</protein>
<feature type="signal peptide" evidence="2">
    <location>
        <begin position="1"/>
        <end position="23"/>
    </location>
</feature>
<feature type="propeptide" id="PRO_0000008123">
    <location>
        <begin position="24"/>
        <end position="69"/>
    </location>
</feature>
<feature type="peptide" id="PRO_0000008124" description="Sarafotoxin-A, Ser-isoform">
    <location>
        <begin position="70"/>
        <end position="90"/>
    </location>
</feature>
<feature type="propeptide" id="PRO_0000008125">
    <location>
        <begin position="92"/>
        <end position="109"/>
    </location>
</feature>
<feature type="peptide" id="PRO_0000008126" description="Sarafotoxin-C">
    <location>
        <begin position="110"/>
        <end position="130"/>
    </location>
</feature>
<feature type="propeptide" id="PRO_0000008127">
    <location>
        <begin position="132"/>
        <end position="149"/>
    </location>
</feature>
<feature type="peptide" id="PRO_0000008128" description="Sarafotoxin-B">
    <location>
        <begin position="150"/>
        <end position="170"/>
    </location>
</feature>
<feature type="propeptide" id="PRO_0000008129">
    <location>
        <begin position="172"/>
        <end position="189"/>
    </location>
</feature>
<feature type="peptide" id="PRO_0000008130" description="Sarafotoxin-C">
    <location>
        <begin position="190"/>
        <end position="210"/>
    </location>
</feature>
<feature type="propeptide" id="PRO_0000008131">
    <location>
        <begin position="212"/>
        <end position="229"/>
    </location>
</feature>
<feature type="peptide" id="PRO_0000008132" description="Sarafotoxin-C">
    <location>
        <begin position="230"/>
        <end position="250"/>
    </location>
</feature>
<feature type="propeptide" id="PRO_0000008133">
    <location>
        <begin position="252"/>
        <end position="269"/>
    </location>
</feature>
<feature type="peptide" id="PRO_0000008134" description="Sarafotoxin-E">
    <location>
        <begin position="270"/>
        <end position="290"/>
    </location>
</feature>
<feature type="propeptide" id="PRO_0000008135">
    <location>
        <begin position="292"/>
        <end position="309"/>
    </location>
</feature>
<feature type="peptide" id="PRO_0000008136" description="Sarafotoxin-A, Ser-isoform">
    <location>
        <begin position="310"/>
        <end position="330"/>
    </location>
</feature>
<feature type="propeptide" id="PRO_0000008137">
    <location>
        <begin position="332"/>
        <end position="349"/>
    </location>
</feature>
<feature type="peptide" id="PRO_0000008138" description="Sarafotoxin-C">
    <location>
        <begin position="350"/>
        <end position="370"/>
    </location>
</feature>
<feature type="propeptide" id="PRO_0000008139">
    <location>
        <begin position="372"/>
        <end position="389"/>
    </location>
</feature>
<feature type="peptide" id="PRO_0000008140" description="Sarafotoxin-C">
    <location>
        <begin position="390"/>
        <end position="410"/>
    </location>
</feature>
<feature type="propeptide" id="PRO_0000008141">
    <location>
        <begin position="412"/>
        <end position="429"/>
    </location>
</feature>
<feature type="peptide" id="PRO_0000008142" description="Sarafotoxin-B">
    <location>
        <begin position="430"/>
        <end position="450"/>
    </location>
</feature>
<feature type="propeptide" id="PRO_0000008143">
    <location>
        <begin position="452"/>
        <end position="469"/>
    </location>
</feature>
<feature type="peptide" id="PRO_0000008144" description="Sarafotoxin-A, Ser-isoform">
    <location>
        <begin position="470"/>
        <end position="490"/>
    </location>
</feature>
<feature type="propeptide" id="PRO_0000008145">
    <location>
        <begin position="492"/>
        <end position="509"/>
    </location>
</feature>
<feature type="peptide" id="PRO_0000008146" description="Sarafotoxin-A, Thr-isoform">
    <location>
        <begin position="510"/>
        <end position="530"/>
    </location>
</feature>
<feature type="propeptide" id="PRO_0000008147">
    <location>
        <begin position="532"/>
        <end position="543"/>
    </location>
</feature>
<feature type="repeat" description="1">
    <location>
        <begin position="51"/>
        <end position="90"/>
    </location>
</feature>
<feature type="repeat" description="2">
    <location>
        <begin position="91"/>
        <end position="130"/>
    </location>
</feature>
<feature type="repeat" description="3">
    <location>
        <begin position="131"/>
        <end position="170"/>
    </location>
</feature>
<feature type="repeat" description="4">
    <location>
        <begin position="171"/>
        <end position="210"/>
    </location>
</feature>
<feature type="repeat" description="5">
    <location>
        <begin position="211"/>
        <end position="250"/>
    </location>
</feature>
<feature type="repeat" description="6">
    <location>
        <begin position="251"/>
        <end position="290"/>
    </location>
</feature>
<feature type="repeat" description="7">
    <location>
        <begin position="291"/>
        <end position="330"/>
    </location>
</feature>
<feature type="repeat" description="8">
    <location>
        <begin position="331"/>
        <end position="370"/>
    </location>
</feature>
<feature type="repeat" description="9">
    <location>
        <begin position="371"/>
        <end position="410"/>
    </location>
</feature>
<feature type="repeat" description="10">
    <location>
        <begin position="411"/>
        <end position="450"/>
    </location>
</feature>
<feature type="repeat" description="11">
    <location>
        <begin position="451"/>
        <end position="490"/>
    </location>
</feature>
<feature type="repeat" description="12">
    <location>
        <begin position="491"/>
        <end position="530"/>
    </location>
</feature>
<feature type="region of interest" description="Disordered" evidence="3">
    <location>
        <begin position="45"/>
        <end position="65"/>
    </location>
</feature>
<feature type="region of interest" description="12 X 40 AA tandem repeats">
    <location>
        <begin position="51"/>
        <end position="530"/>
    </location>
</feature>
<feature type="site" description="Endothelin-receptor binding site" evidence="1">
    <location>
        <position position="90"/>
    </location>
</feature>
<feature type="site" description="Endothelin-receptor binding site" evidence="1">
    <location>
        <position position="130"/>
    </location>
</feature>
<feature type="site" description="Endothelin-receptor binding site" evidence="1">
    <location>
        <position position="170"/>
    </location>
</feature>
<feature type="site" description="Endothelin-receptor binding site" evidence="1">
    <location>
        <position position="210"/>
    </location>
</feature>
<feature type="site" description="Endothelin-receptor binding site" evidence="1">
    <location>
        <position position="250"/>
    </location>
</feature>
<feature type="site" description="Endothelin-receptor binding site" evidence="1">
    <location>
        <position position="290"/>
    </location>
</feature>
<feature type="site" description="Endothelin-receptor binding site" evidence="1">
    <location>
        <position position="330"/>
    </location>
</feature>
<feature type="site" description="Endothelin-receptor binding site" evidence="1">
    <location>
        <position position="370"/>
    </location>
</feature>
<feature type="site" description="Endothelin-receptor binding site" evidence="1">
    <location>
        <position position="410"/>
    </location>
</feature>
<feature type="site" description="Endothelin-receptor binding site" evidence="1">
    <location>
        <position position="450"/>
    </location>
</feature>
<feature type="site" description="Endothelin-receptor binding site" evidence="1">
    <location>
        <position position="490"/>
    </location>
</feature>
<feature type="site" description="Endothelin-receptor binding site" evidence="1">
    <location>
        <position position="530"/>
    </location>
</feature>
<feature type="disulfide bond" evidence="1">
    <location>
        <begin position="70"/>
        <end position="84"/>
    </location>
</feature>
<feature type="disulfide bond" evidence="1">
    <location>
        <begin position="72"/>
        <end position="80"/>
    </location>
</feature>
<feature type="disulfide bond" evidence="1">
    <location>
        <begin position="110"/>
        <end position="124"/>
    </location>
</feature>
<feature type="disulfide bond" evidence="1">
    <location>
        <begin position="112"/>
        <end position="120"/>
    </location>
</feature>
<feature type="disulfide bond" evidence="4">
    <location>
        <begin position="150"/>
        <end position="164"/>
    </location>
</feature>
<feature type="disulfide bond" evidence="4">
    <location>
        <begin position="152"/>
        <end position="160"/>
    </location>
</feature>
<feature type="disulfide bond" evidence="1">
    <location>
        <begin position="190"/>
        <end position="204"/>
    </location>
</feature>
<feature type="disulfide bond" evidence="1">
    <location>
        <begin position="192"/>
        <end position="200"/>
    </location>
</feature>
<feature type="disulfide bond" evidence="1">
    <location>
        <begin position="230"/>
        <end position="244"/>
    </location>
</feature>
<feature type="disulfide bond" evidence="1">
    <location>
        <begin position="232"/>
        <end position="240"/>
    </location>
</feature>
<feature type="disulfide bond" evidence="1">
    <location>
        <begin position="270"/>
        <end position="284"/>
    </location>
</feature>
<feature type="disulfide bond" evidence="1">
    <location>
        <begin position="272"/>
        <end position="280"/>
    </location>
</feature>
<feature type="disulfide bond" evidence="1">
    <location>
        <begin position="310"/>
        <end position="324"/>
    </location>
</feature>
<feature type="disulfide bond" evidence="1">
    <location>
        <begin position="312"/>
        <end position="320"/>
    </location>
</feature>
<feature type="disulfide bond" evidence="1">
    <location>
        <begin position="350"/>
        <end position="364"/>
    </location>
</feature>
<feature type="disulfide bond" evidence="1">
    <location>
        <begin position="352"/>
        <end position="360"/>
    </location>
</feature>
<feature type="disulfide bond" evidence="1">
    <location>
        <begin position="390"/>
        <end position="404"/>
    </location>
</feature>
<feature type="disulfide bond" evidence="1">
    <location>
        <begin position="392"/>
        <end position="400"/>
    </location>
</feature>
<feature type="disulfide bond" evidence="4">
    <location>
        <begin position="430"/>
        <end position="444"/>
    </location>
</feature>
<feature type="disulfide bond" evidence="4">
    <location>
        <begin position="432"/>
        <end position="440"/>
    </location>
</feature>
<feature type="disulfide bond" evidence="1">
    <location>
        <begin position="470"/>
        <end position="484"/>
    </location>
</feature>
<feature type="disulfide bond" evidence="1">
    <location>
        <begin position="472"/>
        <end position="480"/>
    </location>
</feature>
<feature type="disulfide bond" evidence="1">
    <location>
        <begin position="510"/>
        <end position="524"/>
    </location>
</feature>
<feature type="disulfide bond" evidence="1">
    <location>
        <begin position="512"/>
        <end position="520"/>
    </location>
</feature>
<feature type="mutagenesis site" description="Drastic decrease in affinity for ET-B receptors (3 and 5-orders or magnitude for VNRN and DEP, respectively)." evidence="5">
    <original>W</original>
    <variation>WVNRN</variation>
    <variation>WDEP</variation>
    <location>
        <position position="170"/>
    </location>
</feature>
<feature type="mutagenesis site" description="Drastic decrease in affinity for ET-B receptors (3 and 5-orders or magnitude for VNRN and DEP, respectively)." evidence="5">
    <original>W</original>
    <variation>WVNRN</variation>
    <variation>DEP</variation>
    <location>
        <position position="450"/>
    </location>
</feature>
<feature type="strand" evidence="11">
    <location>
        <begin position="433"/>
        <end position="435"/>
    </location>
</feature>
<feature type="helix" evidence="12">
    <location>
        <begin position="438"/>
        <end position="446"/>
    </location>
</feature>
<name>SRTX_ATREN</name>
<reference key="1">
    <citation type="journal article" date="1993" name="J. Biol. Chem.">
        <title>Cloning and sequence analysis of cDNAs encoding precursors of sarafotoxins. Evidence for an unusual 'rosary-type' organization.</title>
        <authorList>
            <person name="Ducancel F."/>
            <person name="Matre V."/>
            <person name="Dupont C."/>
            <person name="Lajeunesse E."/>
            <person name="Wollberg Z."/>
            <person name="Bdolah A."/>
            <person name="Kochva E."/>
            <person name="Boulain J.-C."/>
            <person name="Menez A."/>
        </authorList>
    </citation>
    <scope>NUCLEOTIDE SEQUENCE [MRNA]</scope>
    <source>
        <tissue>Venom gland</tissue>
    </source>
</reference>
<reference key="2">
    <citation type="journal article" date="1988" name="Toxicon">
        <title>Sarafotoxins S6: several isotoxins from Atractaspis engaddensis (burrowing asp) venom that affect the heart.</title>
        <authorList>
            <person name="Takasaki C."/>
            <person name="Tamiya N."/>
            <person name="Bdolah A."/>
            <person name="Wollberg Z."/>
            <person name="Kochva E."/>
        </authorList>
    </citation>
    <scope>PROTEIN SEQUENCE (SARAFOTOXINS A; B AND C)</scope>
    <scope>TOXIC DOSE</scope>
    <scope>SUBCELLULAR LOCATION</scope>
    <source>
        <tissue>Venom</tissue>
    </source>
</reference>
<reference key="3">
    <citation type="journal article" date="1988" name="Science">
        <title>Sarafotoxin, a novel vasoconstrictor peptide: phosphoinositide hydrolysis in rat heart and brain.</title>
        <authorList>
            <person name="Kloog Y."/>
            <person name="Ambar I."/>
            <person name="Sokolovsky M."/>
            <person name="Kochva E."/>
            <person name="Wollberg Z."/>
            <person name="Bdolah A."/>
        </authorList>
    </citation>
    <scope>PROTEIN SEQUENCE (SARAFOTOXINS A; B AND C)</scope>
    <scope>TOXIC DOSE</scope>
    <scope>SUBCELLULAR LOCATION</scope>
    <source>
        <tissue>Venom</tissue>
    </source>
</reference>
<reference key="4">
    <citation type="journal article" date="1992" name="Biochem. Biophys. Res. Commun.">
        <title>Cloning and sequence analysis of a snake, Atractaspis engaddensis gene encoding sarafotoxin S6c.</title>
        <authorList>
            <person name="Takasaki C."/>
            <person name="Itoh Y."/>
            <person name="Onda H."/>
            <person name="Fujino M."/>
        </authorList>
    </citation>
    <scope>NUCLEOTIDE SEQUENCE [GENOMIC DNA] OF 108-130</scope>
    <source>
        <tissue>Liver</tissue>
    </source>
</reference>
<reference key="5">
    <citation type="journal article" date="1990" name="Biochem. Int.">
        <title>Studies on the disulfide bridges of sarafotoxins. Chemical synthesis of sarafotoxin S6B and its homologue with different disulfide bridges.</title>
        <authorList>
            <person name="Aimoto S."/>
            <person name="Hojoh H."/>
            <person name="Takasaki C."/>
        </authorList>
    </citation>
    <scope>DISULFIDE BONDS</scope>
    <scope>SYNTHESIS OF SARAFOTOXIN B</scope>
</reference>
<reference key="6">
    <citation type="journal article" date="2012" name="Biochimie">
        <title>Pharmacological and structural characterization of long-sarafotoxins, a new family of endothelin-like peptides: role of the C-terminus extension.</title>
        <authorList>
            <person name="Mourier G."/>
            <person name="Hajj M."/>
            <person name="Cordier F."/>
            <person name="Zorba A."/>
            <person name="Gao X."/>
            <person name="Coskun T."/>
            <person name="Herbet A."/>
            <person name="Marcon E."/>
            <person name="Beau F."/>
            <person name="Delepierre M."/>
            <person name="Ducancel F."/>
            <person name="Servent D."/>
        </authorList>
    </citation>
    <scope>FUNCTION</scope>
    <scope>TOXIN TARGET</scope>
    <scope>MUTAGENESIS OF TRP-170 AND TRP-450</scope>
</reference>
<reference key="7">
    <citation type="journal article" date="1991" name="FEBS Lett.">
        <title>Conformation of sarafotoxin-6b in aqueous solution determined by NMR spectroscopy and distance geometry.</title>
        <authorList>
            <person name="Mills R.G."/>
            <person name="Atkins A.R."/>
            <person name="Harvey T."/>
            <person name="Junius F.K."/>
            <person name="Smith R."/>
            <person name="King G.F."/>
        </authorList>
    </citation>
    <scope>STRUCTURE BY NMR OF SARAFOTOXIN B</scope>
</reference>
<reference key="8">
    <citation type="journal article" date="1991" name="Neurochem. Int.">
        <title>1H NMR study of the solution structure of sarafotoxin-S6b.</title>
        <authorList>
            <person name="Aumelas A."/>
            <person name="Chiche L."/>
            <person name="Mahe E."/>
            <person name="Le-Nguyen D."/>
            <person name="Sizun P."/>
            <person name="Berthault P."/>
            <person name="Perly B."/>
        </authorList>
    </citation>
    <scope>STRUCTURE BY NMR OF SARAFOTOXIN B</scope>
</reference>
<reference key="9">
    <citation type="journal article" date="1995" name="Biochemistry">
        <title>1H NMR studies of sarafotoxin SRTb, a nonselective endothelin receptor agonist, and IRL 1620, an ETB receptor-specific agonist.</title>
        <authorList>
            <person name="Atkins A.R."/>
            <person name="Martin R.C."/>
            <person name="Smith R."/>
        </authorList>
    </citation>
    <scope>STRUCTURE BY NMR OF SARAFOTOXIN B</scope>
</reference>
<evidence type="ECO:0000250" key="1"/>
<evidence type="ECO:0000255" key="2"/>
<evidence type="ECO:0000256" key="3">
    <source>
        <dbReference type="SAM" id="MobiDB-lite"/>
    </source>
</evidence>
<evidence type="ECO:0000269" key="4">
    <source>
    </source>
</evidence>
<evidence type="ECO:0000269" key="5">
    <source>
    </source>
</evidence>
<evidence type="ECO:0000269" key="6">
    <source>
    </source>
</evidence>
<evidence type="ECO:0000269" key="7">
    <source>
    </source>
</evidence>
<evidence type="ECO:0000305" key="8"/>
<evidence type="ECO:0000305" key="9">
    <source>
    </source>
</evidence>
<evidence type="ECO:0000305" key="10">
    <source>
    </source>
</evidence>
<evidence type="ECO:0007829" key="11">
    <source>
        <dbReference type="PDB" id="1SRB"/>
    </source>
</evidence>
<evidence type="ECO:0007829" key="12">
    <source>
        <dbReference type="PDB" id="6LRY"/>
    </source>
</evidence>
<sequence length="543" mass="62326">MALLPRLAAGGLLLLLALAALEGKPAPSALSQLLEKRSEDQAAAGRIIDGGDTKQAARDPSPQRNVEPLCSCKDMSDKECLNFCHQDVIWRDTKQAARDPSPQRNVEPLCTCNDMTDEECLNFCHQDVIWRDTKQAARDPSPQRNVEPLCSCKDMTDKECLYFCHQDVIWRDTKQAARDPSPQRNVEPLCTCNDMTDEECLNFCHQDVIWRDTKQAARDPSPQRNVEPLCTCNDMTDEECLNFCHQDVIWRDTKQAARDPSPQRNVEPLCTCKDMTDKECLYFCHQGIIWRDTKQAARDPSPQRNVEPLCSCKDMSDKECLNFCHQDVIWRDTKQAARDPSPQRNVEPLCTCNDMTDEECLNFCHQDVIWRDTKQAARDPSPQRNVEPLCTCNDMTDEECLNFCHQDVIWRDTKQAARDPSPQRNVEPLCSCKDMTDKECLYFCHQDVIWRDTKQAARDPSPQRNVEPLCSCKDMSDKECLNFCHQDVIWRDTKQAARDPSPQRNVEPLCSCKDMTDKECLNFCHQDVIWKNADTSANPEFLG</sequence>
<comment type="function">
    <text evidence="5">Vasoconstrictor activity. These toxins cause cardiac arrest probably as a result of coronary vasospasm.</text>
</comment>
<comment type="function">
    <molecule>Sarafotoxin-B</molecule>
    <text evidence="1 5">Vasoconstrictor activity. Causes cardiac arrest probably as a result of coronary vasospasm (By similarity). Displays high agonistic activities towards endothelin-2 receptor (EDNRB) (displays affinity in the picomolar range) and endothelin-1 receptor (EDNRA) (lower affinities) (PubMed:21889567).</text>
</comment>
<comment type="subcellular location">
    <subcellularLocation>
        <location evidence="6 7">Secreted</location>
    </subcellularLocation>
</comment>
<comment type="tissue specificity">
    <text evidence="9 10">Expressed by the venom gland.</text>
</comment>
<comment type="toxic dose">
    <molecule>Sarafotoxin-A, Ser-isoform</molecule>
    <text evidence="6 7">LD(50) is 0.015 mg/kg by intravenous injection into mice.</text>
</comment>
<comment type="toxic dose">
    <molecule>Sarafotoxin-A, Thr-isoform</molecule>
    <text evidence="6 7">LD(50) is 0.015 mg/kg by intravenous injection into mice.</text>
</comment>
<comment type="toxic dose">
    <molecule>Sarafotoxin-B</molecule>
    <text evidence="6 7">LD(50) is 0.015 mg/kg by intravenous injection into mice.</text>
</comment>
<comment type="toxic dose">
    <molecule>Sarafotoxin-C</molecule>
    <text evidence="7">LD(50) is 0.3 mg/kg by intravenous injection into mice.</text>
</comment>
<comment type="similarity">
    <text evidence="8">Belongs to the endothelin/sarafotoxin family.</text>
</comment>
<dbReference type="EMBL" id="L07528">
    <property type="protein sequence ID" value="AAA48515.1"/>
    <property type="molecule type" value="mRNA"/>
</dbReference>
<dbReference type="EMBL" id="D13322">
    <property type="protein sequence ID" value="BAA02579.2"/>
    <property type="molecule type" value="Genomic_DNA"/>
</dbReference>
<dbReference type="PIR" id="A46601">
    <property type="entry name" value="A46601"/>
</dbReference>
<dbReference type="PDB" id="1SRB">
    <property type="method" value="NMR"/>
    <property type="chains" value="A=430-450"/>
</dbReference>
<dbReference type="PDB" id="6LRY">
    <property type="method" value="X-ray"/>
    <property type="resolution" value="3.00 A"/>
    <property type="chains" value="B=430-450"/>
</dbReference>
<dbReference type="PDBsum" id="1SRB"/>
<dbReference type="PDBsum" id="6LRY"/>
<dbReference type="SMR" id="P13208"/>
<dbReference type="EvolutionaryTrace" id="P13208"/>
<dbReference type="GO" id="GO:0005615">
    <property type="term" value="C:extracellular space"/>
    <property type="evidence" value="ECO:0007669"/>
    <property type="project" value="TreeGrafter"/>
</dbReference>
<dbReference type="GO" id="GO:0031708">
    <property type="term" value="F:endothelin B receptor binding"/>
    <property type="evidence" value="ECO:0007669"/>
    <property type="project" value="TreeGrafter"/>
</dbReference>
<dbReference type="GO" id="GO:0005179">
    <property type="term" value="F:hormone activity"/>
    <property type="evidence" value="ECO:0007669"/>
    <property type="project" value="TreeGrafter"/>
</dbReference>
<dbReference type="GO" id="GO:0090729">
    <property type="term" value="F:toxin activity"/>
    <property type="evidence" value="ECO:0007669"/>
    <property type="project" value="UniProtKB-KW"/>
</dbReference>
<dbReference type="GO" id="GO:0006874">
    <property type="term" value="P:intracellular calcium ion homeostasis"/>
    <property type="evidence" value="ECO:0007669"/>
    <property type="project" value="TreeGrafter"/>
</dbReference>
<dbReference type="GO" id="GO:0003100">
    <property type="term" value="P:regulation of systemic arterial blood pressure by endothelin"/>
    <property type="evidence" value="ECO:0007669"/>
    <property type="project" value="TreeGrafter"/>
</dbReference>
<dbReference type="GO" id="GO:0019229">
    <property type="term" value="P:regulation of vasoconstriction"/>
    <property type="evidence" value="ECO:0007669"/>
    <property type="project" value="InterPro"/>
</dbReference>
<dbReference type="GO" id="GO:0014826">
    <property type="term" value="P:vein smooth muscle contraction"/>
    <property type="evidence" value="ECO:0007669"/>
    <property type="project" value="TreeGrafter"/>
</dbReference>
<dbReference type="InterPro" id="IPR020475">
    <property type="entry name" value="Endothelin"/>
</dbReference>
<dbReference type="InterPro" id="IPR019764">
    <property type="entry name" value="Endothelin_toxin_CS"/>
</dbReference>
<dbReference type="InterPro" id="IPR001928">
    <property type="entry name" value="Endothln-like_toxin"/>
</dbReference>
<dbReference type="PANTHER" id="PTHR13874">
    <property type="entry name" value="ENDOTHELIN"/>
    <property type="match status" value="1"/>
</dbReference>
<dbReference type="PANTHER" id="PTHR13874:SF9">
    <property type="entry name" value="ENDOTHELIN-2"/>
    <property type="match status" value="1"/>
</dbReference>
<dbReference type="Pfam" id="PF00322">
    <property type="entry name" value="Endothelin"/>
    <property type="match status" value="12"/>
</dbReference>
<dbReference type="SMART" id="SM00272">
    <property type="entry name" value="END"/>
    <property type="match status" value="12"/>
</dbReference>
<dbReference type="PROSITE" id="PS00270">
    <property type="entry name" value="ENDOTHELIN"/>
    <property type="match status" value="12"/>
</dbReference>
<accession>P13208</accession>
<accession>P13209</accession>
<accession>P13210</accession>
<proteinExistence type="evidence at protein level"/>
<keyword id="KW-0002">3D-structure</keyword>
<keyword id="KW-0123">Cardiotoxin</keyword>
<keyword id="KW-0903">Direct protein sequencing</keyword>
<keyword id="KW-1015">Disulfide bond</keyword>
<keyword id="KW-1213">G-protein coupled receptor impairing toxin</keyword>
<keyword id="KW-0677">Repeat</keyword>
<keyword id="KW-0964">Secreted</keyword>
<keyword id="KW-0732">Signal</keyword>
<keyword id="KW-0800">Toxin</keyword>
<keyword id="KW-0838">Vasoactive</keyword>
<keyword id="KW-0839">Vasoconstrictor</keyword>